<feature type="chain" id="PRO_0000456517" description="Large ribosomal subunit protein uL22">
    <location>
        <begin position="1"/>
        <end position="185"/>
    </location>
</feature>
<name>RL17B_CANAL</name>
<dbReference type="EMBL" id="CP017624">
    <property type="protein sequence ID" value="AOW27486.1"/>
    <property type="molecule type" value="Genomic_DNA"/>
</dbReference>
<dbReference type="RefSeq" id="XP_712916.1">
    <property type="nucleotide sequence ID" value="XM_707823.1"/>
</dbReference>
<dbReference type="PDB" id="7PZY">
    <property type="method" value="EM"/>
    <property type="resolution" value="2.32 A"/>
    <property type="chains" value="x=1-185"/>
</dbReference>
<dbReference type="PDB" id="7Q08">
    <property type="method" value="EM"/>
    <property type="resolution" value="2.56 A"/>
    <property type="chains" value="x=1-185"/>
</dbReference>
<dbReference type="PDB" id="7Q0F">
    <property type="method" value="EM"/>
    <property type="resolution" value="2.64 A"/>
    <property type="chains" value="x=1-185"/>
</dbReference>
<dbReference type="PDB" id="7Q0P">
    <property type="method" value="EM"/>
    <property type="resolution" value="2.77 A"/>
    <property type="chains" value="x=1-185"/>
</dbReference>
<dbReference type="PDB" id="7Q0R">
    <property type="method" value="EM"/>
    <property type="resolution" value="2.67 A"/>
    <property type="chains" value="x=1-185"/>
</dbReference>
<dbReference type="PDB" id="8C3A">
    <property type="method" value="X-ray"/>
    <property type="resolution" value="3.00 A"/>
    <property type="chains" value="BK/x=1-185"/>
</dbReference>
<dbReference type="PDB" id="8OGJ">
    <property type="method" value="EM"/>
    <property type="resolution" value="3.10 A"/>
    <property type="chains" value="x=1-185"/>
</dbReference>
<dbReference type="PDB" id="8OH6">
    <property type="method" value="X-ray"/>
    <property type="resolution" value="3.35 A"/>
    <property type="chains" value="BK/x=1-185"/>
</dbReference>
<dbReference type="PDB" id="8OI5">
    <property type="method" value="X-ray"/>
    <property type="resolution" value="2.90 A"/>
    <property type="chains" value="BK/x=1-185"/>
</dbReference>
<dbReference type="PDB" id="8OJ3">
    <property type="method" value="X-ray"/>
    <property type="resolution" value="3.50 A"/>
    <property type="chains" value="BK/x=1-185"/>
</dbReference>
<dbReference type="PDBsum" id="7PZY"/>
<dbReference type="PDBsum" id="7Q08"/>
<dbReference type="PDBsum" id="7Q0F"/>
<dbReference type="PDBsum" id="7Q0P"/>
<dbReference type="PDBsum" id="7Q0R"/>
<dbReference type="PDBsum" id="8C3A"/>
<dbReference type="PDBsum" id="8OGJ"/>
<dbReference type="PDBsum" id="8OH6"/>
<dbReference type="PDBsum" id="8OI5"/>
<dbReference type="PDBsum" id="8OJ3"/>
<dbReference type="SMR" id="Q59TE0"/>
<dbReference type="FunCoup" id="Q59TE0">
    <property type="interactions" value="1082"/>
</dbReference>
<dbReference type="STRING" id="237561.Q59TE0"/>
<dbReference type="EnsemblFungi" id="C2_04600C_A-T">
    <property type="protein sequence ID" value="C2_04600C_A-T-p1"/>
    <property type="gene ID" value="C2_04600C_A"/>
</dbReference>
<dbReference type="GeneID" id="3645439"/>
<dbReference type="KEGG" id="cal:CAALFM_C204600CA"/>
<dbReference type="CGD" id="CAL0000193181">
    <property type="gene designation" value="RPL17B"/>
</dbReference>
<dbReference type="VEuPathDB" id="FungiDB:C2_04600C_A"/>
<dbReference type="eggNOG" id="KOG3353">
    <property type="taxonomic scope" value="Eukaryota"/>
</dbReference>
<dbReference type="HOGENOM" id="CLU_083987_0_0_1"/>
<dbReference type="InParanoid" id="Q59TE0"/>
<dbReference type="OMA" id="NTYETAR"/>
<dbReference type="OrthoDB" id="10254664at2759"/>
<dbReference type="Proteomes" id="UP000000559">
    <property type="component" value="Chromosome 2"/>
</dbReference>
<dbReference type="GO" id="GO:0009986">
    <property type="term" value="C:cell surface"/>
    <property type="evidence" value="ECO:0000314"/>
    <property type="project" value="CGD"/>
</dbReference>
<dbReference type="GO" id="GO:0022625">
    <property type="term" value="C:cytosolic large ribosomal subunit"/>
    <property type="evidence" value="ECO:0000318"/>
    <property type="project" value="GO_Central"/>
</dbReference>
<dbReference type="GO" id="GO:0003735">
    <property type="term" value="F:structural constituent of ribosome"/>
    <property type="evidence" value="ECO:0000318"/>
    <property type="project" value="GO_Central"/>
</dbReference>
<dbReference type="GO" id="GO:0002181">
    <property type="term" value="P:cytoplasmic translation"/>
    <property type="evidence" value="ECO:0000318"/>
    <property type="project" value="GO_Central"/>
</dbReference>
<dbReference type="CDD" id="cd00336">
    <property type="entry name" value="Ribosomal_L22"/>
    <property type="match status" value="1"/>
</dbReference>
<dbReference type="FunFam" id="3.90.470.10:FF:000010">
    <property type="entry name" value="60S ribosomal protein L17"/>
    <property type="match status" value="1"/>
</dbReference>
<dbReference type="Gene3D" id="3.90.470.10">
    <property type="entry name" value="Ribosomal protein L22/L17"/>
    <property type="match status" value="1"/>
</dbReference>
<dbReference type="InterPro" id="IPR001063">
    <property type="entry name" value="Ribosomal_uL22"/>
</dbReference>
<dbReference type="InterPro" id="IPR018260">
    <property type="entry name" value="Ribosomal_uL22_CS"/>
</dbReference>
<dbReference type="InterPro" id="IPR005721">
    <property type="entry name" value="Ribosomal_uL22_euk/arc"/>
</dbReference>
<dbReference type="InterPro" id="IPR036394">
    <property type="entry name" value="Ribosomal_uL22_sf"/>
</dbReference>
<dbReference type="NCBIfam" id="TIGR01038">
    <property type="entry name" value="uL22_arch_euk"/>
    <property type="match status" value="1"/>
</dbReference>
<dbReference type="PANTHER" id="PTHR11593">
    <property type="entry name" value="60S RIBOSOMAL PROTEIN L17"/>
    <property type="match status" value="1"/>
</dbReference>
<dbReference type="PANTHER" id="PTHR11593:SF10">
    <property type="entry name" value="60S RIBOSOMAL PROTEIN L17"/>
    <property type="match status" value="1"/>
</dbReference>
<dbReference type="Pfam" id="PF00237">
    <property type="entry name" value="Ribosomal_L22"/>
    <property type="match status" value="1"/>
</dbReference>
<dbReference type="SUPFAM" id="SSF54843">
    <property type="entry name" value="Ribosomal protein L22"/>
    <property type="match status" value="1"/>
</dbReference>
<dbReference type="PROSITE" id="PS00464">
    <property type="entry name" value="RIBOSOMAL_L22"/>
    <property type="match status" value="1"/>
</dbReference>
<comment type="function">
    <text evidence="4">Component of the ribosome, a large ribonucleoprotein complex responsible for the synthesis of proteins in the cell. The small ribosomal subunit (SSU) binds messenger RNAs (mRNAs) and translates the encoded message by selecting cognate aminoacyl-transfer RNA (tRNA) molecules. The large subunit (LSU) contains the ribosomal catalytic site termed the peptidyl transferase center (PTC), which catalyzes the formation of peptide bonds, thereby polymerizing the amino acids delivered by tRNAs into a polypeptide chain. The nascent polypeptides leave the ribosome through a tunnel in the LSU and interact with protein factors that function in enzymatic processing, targeting, and the membrane insertion of nascent chains at the exit of the ribosomal tunnel.</text>
</comment>
<comment type="subunit">
    <text evidence="1">Component of the large ribosomal subunit (PubMed:35613268). Mature ribosomes consist of a small (40S) and a large (60S) subunit (PubMed:35613268). The 40S subunit contains about 32 different proteins and 1 molecule of RNA (18S) (PubMed:35613268). The 60S subunit contains 45 different proteins and 3 molecules of RNA (25S, 5.8S and 5S) (PubMed:35613268).</text>
</comment>
<comment type="subcellular location">
    <subcellularLocation>
        <location evidence="4">Cytoplasm</location>
    </subcellularLocation>
</comment>
<comment type="similarity">
    <text evidence="3">Belongs to the universal ribosomal protein uL22 family.</text>
</comment>
<proteinExistence type="evidence at protein level"/>
<reference key="1">
    <citation type="journal article" date="2004" name="Proc. Natl. Acad. Sci. U.S.A.">
        <title>The diploid genome sequence of Candida albicans.</title>
        <authorList>
            <person name="Jones T."/>
            <person name="Federspiel N.A."/>
            <person name="Chibana H."/>
            <person name="Dungan J."/>
            <person name="Kalman S."/>
            <person name="Magee B.B."/>
            <person name="Newport G."/>
            <person name="Thorstenson Y.R."/>
            <person name="Agabian N."/>
            <person name="Magee P.T."/>
            <person name="Davis R.W."/>
            <person name="Scherer S."/>
        </authorList>
    </citation>
    <scope>NUCLEOTIDE SEQUENCE [LARGE SCALE GENOMIC DNA]</scope>
    <source>
        <strain>SC5314 / ATCC MYA-2876</strain>
    </source>
</reference>
<reference key="2">
    <citation type="journal article" date="2007" name="Genome Biol.">
        <title>Assembly of the Candida albicans genome into sixteen supercontigs aligned on the eight chromosomes.</title>
        <authorList>
            <person name="van het Hoog M."/>
            <person name="Rast T.J."/>
            <person name="Martchenko M."/>
            <person name="Grindle S."/>
            <person name="Dignard D."/>
            <person name="Hogues H."/>
            <person name="Cuomo C."/>
            <person name="Berriman M."/>
            <person name="Scherer S."/>
            <person name="Magee B.B."/>
            <person name="Whiteway M."/>
            <person name="Chibana H."/>
            <person name="Nantel A."/>
            <person name="Magee P.T."/>
        </authorList>
    </citation>
    <scope>GENOME REANNOTATION</scope>
    <source>
        <strain>SC5314 / ATCC MYA-2876</strain>
    </source>
</reference>
<reference key="3">
    <citation type="journal article" date="2013" name="Genome Biol.">
        <title>Assembly of a phased diploid Candida albicans genome facilitates allele-specific measurements and provides a simple model for repeat and indel structure.</title>
        <authorList>
            <person name="Muzzey D."/>
            <person name="Schwartz K."/>
            <person name="Weissman J.S."/>
            <person name="Sherlock G."/>
        </authorList>
    </citation>
    <scope>NUCLEOTIDE SEQUENCE [LARGE SCALE GENOMIC DNA]</scope>
    <scope>GENOME REANNOTATION</scope>
    <source>
        <strain>SC5314 / ATCC MYA-2876</strain>
    </source>
</reference>
<reference evidence="5 6 7" key="4">
    <citation type="journal article" date="2022" name="Sci. Adv.">
        <title>E-site drug specificity of the human pathogen Candida albicans ribosome.</title>
        <authorList>
            <person name="Zgadzay Y."/>
            <person name="Kolosova O."/>
            <person name="Stetsenko A."/>
            <person name="Wu C."/>
            <person name="Bruchlen D."/>
            <person name="Usachev K."/>
            <person name="Validov S."/>
            <person name="Jenner L."/>
            <person name="Rogachev A."/>
            <person name="Yusupova G."/>
            <person name="Sachs M.S."/>
            <person name="Guskov A."/>
            <person name="Yusupov M."/>
        </authorList>
    </citation>
    <scope>STRUCTURE BY ELECTRON MICROSCOPY (2.32 ANGSTROMS) OF THE 80S RIBOSOME</scope>
    <scope>SUBUNIT</scope>
</reference>
<organism>
    <name type="scientific">Candida albicans (strain SC5314 / ATCC MYA-2876)</name>
    <name type="common">Yeast</name>
    <dbReference type="NCBI Taxonomy" id="237561"/>
    <lineage>
        <taxon>Eukaryota</taxon>
        <taxon>Fungi</taxon>
        <taxon>Dikarya</taxon>
        <taxon>Ascomycota</taxon>
        <taxon>Saccharomycotina</taxon>
        <taxon>Pichiomycetes</taxon>
        <taxon>Debaryomycetaceae</taxon>
        <taxon>Candida/Lodderomyces clade</taxon>
        <taxon>Candida</taxon>
    </lineage>
</organism>
<keyword id="KW-0002">3D-structure</keyword>
<keyword id="KW-0963">Cytoplasm</keyword>
<keyword id="KW-1185">Reference proteome</keyword>
<keyword id="KW-0687">Ribonucleoprotein</keyword>
<keyword id="KW-0689">Ribosomal protein</keyword>
<sequence length="185" mass="20963">MVRYAATPANPAKSASARGSYLRVSFKNTRETAQAINGWKLEKAQKYLDQVLDHQRAIPFRRYNSSIGRTGQGKEFGVTKARWPAKSVNFVKDLLRNAQANAEAKGLDSSKLVISHIQVNHAPKQRRRTYRAHGRINAYQSTPSHIELTLTEEDEIVEKPVEQKQIRLNSRQRGRLASQKRLTAA</sequence>
<accession>Q59TE0</accession>
<evidence type="ECO:0000269" key="1">
    <source>
    </source>
</evidence>
<evidence type="ECO:0000303" key="2">
    <source>
    </source>
</evidence>
<evidence type="ECO:0000305" key="3"/>
<evidence type="ECO:0000305" key="4">
    <source>
    </source>
</evidence>
<evidence type="ECO:0007744" key="5">
    <source>
        <dbReference type="PDB" id="7PZY"/>
    </source>
</evidence>
<evidence type="ECO:0007744" key="6">
    <source>
        <dbReference type="PDB" id="7Q0F"/>
    </source>
</evidence>
<evidence type="ECO:0007744" key="7">
    <source>
        <dbReference type="PDB" id="7Q0P"/>
    </source>
</evidence>
<gene>
    <name evidence="2" type="primary">RPL17B</name>
    <name type="synonym">RPL17</name>
    <name type="ordered locus">orf19.4490</name>
    <name type="ORF">CAALFM_C204600CA</name>
</gene>
<protein>
    <recommendedName>
        <fullName evidence="2">Large ribosomal subunit protein uL22</fullName>
    </recommendedName>
    <alternativeName>
        <fullName>60S ribosomal protein L17-B</fullName>
    </alternativeName>
</protein>